<protein>
    <recommendedName>
        <fullName>Protein LctB</fullName>
    </recommendedName>
</protein>
<sequence length="134" mass="14834">MDYAFLGIVAAVLLGSITSLWTVRVQATHRLSLDSLWVLVQWYLTMLLGFAMIYMILQVNGHAVFTPSPNSASKDRLSLLEDSLYLSGMTLLSVGYGDVTPIGVGRWIAIAEALVGYIMPAVIVTRTVFDWDHR</sequence>
<accession>P06549</accession>
<gene>
    <name type="primary">lctB</name>
</gene>
<reference key="1">
    <citation type="journal article" date="1987" name="Nucleic Acids Res.">
        <title>Sequence of the Bacillus caldotenax and Bacillus stearothermophilus lctB genes.</title>
        <authorList>
            <person name="Barstow D.A."/>
            <person name="Murphy J."/>
            <person name="Sharman A."/>
            <person name="Atkinson T."/>
            <person name="Minton N."/>
        </authorList>
    </citation>
    <scope>NUCLEOTIDE SEQUENCE [GENOMIC DNA]</scope>
</reference>
<dbReference type="EMBL" id="X05066">
    <property type="protein sequence ID" value="CAA28732.1"/>
    <property type="molecule type" value="Genomic_DNA"/>
</dbReference>
<dbReference type="PIR" id="A25748">
    <property type="entry name" value="A25748"/>
</dbReference>
<dbReference type="SMR" id="P06549"/>
<dbReference type="Gene3D" id="1.10.287.70">
    <property type="match status" value="1"/>
</dbReference>
<dbReference type="InterPro" id="IPR013099">
    <property type="entry name" value="K_chnl_dom"/>
</dbReference>
<dbReference type="Pfam" id="PF07885">
    <property type="entry name" value="Ion_trans_2"/>
    <property type="match status" value="1"/>
</dbReference>
<dbReference type="SUPFAM" id="SSF81324">
    <property type="entry name" value="Voltage-gated potassium channels"/>
    <property type="match status" value="1"/>
</dbReference>
<proteinExistence type="predicted"/>
<name>LCTB_BACCA</name>
<organism>
    <name type="scientific">Bacillus caldotenax</name>
    <dbReference type="NCBI Taxonomy" id="1395"/>
    <lineage>
        <taxon>Bacteria</taxon>
        <taxon>Bacillati</taxon>
        <taxon>Bacillota</taxon>
        <taxon>Bacilli</taxon>
        <taxon>Bacillales</taxon>
        <taxon>Anoxybacillaceae</taxon>
        <taxon>Geobacillus</taxon>
        <taxon>Geobacillus thermoleovorans group</taxon>
    </lineage>
</organism>
<feature type="chain" id="PRO_0000084382" description="Protein LctB">
    <location>
        <begin position="1"/>
        <end position="134"/>
    </location>
</feature>